<gene>
    <name evidence="6" type="primary">ZNF354B</name>
</gene>
<feature type="chain" id="PRO_0000280406" description="Zinc finger protein 354B">
    <location>
        <begin position="1"/>
        <end position="612"/>
    </location>
</feature>
<feature type="domain" description="KRAB" evidence="3">
    <location>
        <begin position="14"/>
        <end position="85"/>
    </location>
</feature>
<feature type="zinc finger region" description="C2H2-type 1" evidence="2">
    <location>
        <begin position="214"/>
        <end position="236"/>
    </location>
</feature>
<feature type="zinc finger region" description="C2H2-type 2" evidence="2">
    <location>
        <begin position="242"/>
        <end position="264"/>
    </location>
</feature>
<feature type="zinc finger region" description="C2H2-type 3" evidence="2">
    <location>
        <begin position="270"/>
        <end position="292"/>
    </location>
</feature>
<feature type="zinc finger region" description="C2H2-type 4" evidence="2">
    <location>
        <begin position="298"/>
        <end position="320"/>
    </location>
</feature>
<feature type="zinc finger region" description="C2H2-type 5" evidence="2">
    <location>
        <begin position="354"/>
        <end position="376"/>
    </location>
</feature>
<feature type="zinc finger region" description="C2H2-type 6" evidence="2">
    <location>
        <begin position="382"/>
        <end position="404"/>
    </location>
</feature>
<feature type="zinc finger region" description="C2H2-type 7" evidence="2">
    <location>
        <begin position="410"/>
        <end position="432"/>
    </location>
</feature>
<feature type="zinc finger region" description="C2H2-type 8" evidence="2">
    <location>
        <begin position="438"/>
        <end position="460"/>
    </location>
</feature>
<feature type="zinc finger region" description="C2H2-type 9" evidence="2">
    <location>
        <begin position="466"/>
        <end position="488"/>
    </location>
</feature>
<feature type="zinc finger region" description="C2H2-type 10" evidence="2">
    <location>
        <begin position="494"/>
        <end position="516"/>
    </location>
</feature>
<feature type="zinc finger region" description="C2H2-type 11" evidence="2">
    <location>
        <begin position="522"/>
        <end position="544"/>
    </location>
</feature>
<feature type="zinc finger region" description="C2H2-type 12" evidence="2">
    <location>
        <begin position="550"/>
        <end position="572"/>
    </location>
</feature>
<feature type="zinc finger region" description="C2H2-type 13" evidence="2">
    <location>
        <begin position="578"/>
        <end position="600"/>
    </location>
</feature>
<feature type="region of interest" description="Disordered" evidence="4">
    <location>
        <begin position="76"/>
        <end position="102"/>
    </location>
</feature>
<feature type="region of interest" description="Disordered" evidence="4">
    <location>
        <begin position="320"/>
        <end position="340"/>
    </location>
</feature>
<feature type="compositionally biased region" description="Polar residues" evidence="4">
    <location>
        <begin position="80"/>
        <end position="102"/>
    </location>
</feature>
<feature type="cross-link" description="Glycyl lysine isopeptide (Lys-Gly) (interchain with G-Cter in SUMO2)" evidence="7">
    <location>
        <position position="150"/>
    </location>
</feature>
<feature type="cross-link" description="Glycyl lysine isopeptide (Lys-Gly) (interchain with G-Cter in SUMO2)" evidence="7">
    <location>
        <position position="175"/>
    </location>
</feature>
<reference key="1">
    <citation type="journal article" date="2004" name="Nat. Genet.">
        <title>Complete sequencing and characterization of 21,243 full-length human cDNAs.</title>
        <authorList>
            <person name="Ota T."/>
            <person name="Suzuki Y."/>
            <person name="Nishikawa T."/>
            <person name="Otsuki T."/>
            <person name="Sugiyama T."/>
            <person name="Irie R."/>
            <person name="Wakamatsu A."/>
            <person name="Hayashi K."/>
            <person name="Sato H."/>
            <person name="Nagai K."/>
            <person name="Kimura K."/>
            <person name="Makita H."/>
            <person name="Sekine M."/>
            <person name="Obayashi M."/>
            <person name="Nishi T."/>
            <person name="Shibahara T."/>
            <person name="Tanaka T."/>
            <person name="Ishii S."/>
            <person name="Yamamoto J."/>
            <person name="Saito K."/>
            <person name="Kawai Y."/>
            <person name="Isono Y."/>
            <person name="Nakamura Y."/>
            <person name="Nagahari K."/>
            <person name="Murakami K."/>
            <person name="Yasuda T."/>
            <person name="Iwayanagi T."/>
            <person name="Wagatsuma M."/>
            <person name="Shiratori A."/>
            <person name="Sudo H."/>
            <person name="Hosoiri T."/>
            <person name="Kaku Y."/>
            <person name="Kodaira H."/>
            <person name="Kondo H."/>
            <person name="Sugawara M."/>
            <person name="Takahashi M."/>
            <person name="Kanda K."/>
            <person name="Yokoi T."/>
            <person name="Furuya T."/>
            <person name="Kikkawa E."/>
            <person name="Omura Y."/>
            <person name="Abe K."/>
            <person name="Kamihara K."/>
            <person name="Katsuta N."/>
            <person name="Sato K."/>
            <person name="Tanikawa M."/>
            <person name="Yamazaki M."/>
            <person name="Ninomiya K."/>
            <person name="Ishibashi T."/>
            <person name="Yamashita H."/>
            <person name="Murakawa K."/>
            <person name="Fujimori K."/>
            <person name="Tanai H."/>
            <person name="Kimata M."/>
            <person name="Watanabe M."/>
            <person name="Hiraoka S."/>
            <person name="Chiba Y."/>
            <person name="Ishida S."/>
            <person name="Ono Y."/>
            <person name="Takiguchi S."/>
            <person name="Watanabe S."/>
            <person name="Yosida M."/>
            <person name="Hotuta T."/>
            <person name="Kusano J."/>
            <person name="Kanehori K."/>
            <person name="Takahashi-Fujii A."/>
            <person name="Hara H."/>
            <person name="Tanase T.-O."/>
            <person name="Nomura Y."/>
            <person name="Togiya S."/>
            <person name="Komai F."/>
            <person name="Hara R."/>
            <person name="Takeuchi K."/>
            <person name="Arita M."/>
            <person name="Imose N."/>
            <person name="Musashino K."/>
            <person name="Yuuki H."/>
            <person name="Oshima A."/>
            <person name="Sasaki N."/>
            <person name="Aotsuka S."/>
            <person name="Yoshikawa Y."/>
            <person name="Matsunawa H."/>
            <person name="Ichihara T."/>
            <person name="Shiohata N."/>
            <person name="Sano S."/>
            <person name="Moriya S."/>
            <person name="Momiyama H."/>
            <person name="Satoh N."/>
            <person name="Takami S."/>
            <person name="Terashima Y."/>
            <person name="Suzuki O."/>
            <person name="Nakagawa S."/>
            <person name="Senoh A."/>
            <person name="Mizoguchi H."/>
            <person name="Goto Y."/>
            <person name="Shimizu F."/>
            <person name="Wakebe H."/>
            <person name="Hishigaki H."/>
            <person name="Watanabe T."/>
            <person name="Sugiyama A."/>
            <person name="Takemoto M."/>
            <person name="Kawakami B."/>
            <person name="Yamazaki M."/>
            <person name="Watanabe K."/>
            <person name="Kumagai A."/>
            <person name="Itakura S."/>
            <person name="Fukuzumi Y."/>
            <person name="Fujimori Y."/>
            <person name="Komiyama M."/>
            <person name="Tashiro H."/>
            <person name="Tanigami A."/>
            <person name="Fujiwara T."/>
            <person name="Ono T."/>
            <person name="Yamada K."/>
            <person name="Fujii Y."/>
            <person name="Ozaki K."/>
            <person name="Hirao M."/>
            <person name="Ohmori Y."/>
            <person name="Kawabata A."/>
            <person name="Hikiji T."/>
            <person name="Kobatake N."/>
            <person name="Inagaki H."/>
            <person name="Ikema Y."/>
            <person name="Okamoto S."/>
            <person name="Okitani R."/>
            <person name="Kawakami T."/>
            <person name="Noguchi S."/>
            <person name="Itoh T."/>
            <person name="Shigeta K."/>
            <person name="Senba T."/>
            <person name="Matsumura K."/>
            <person name="Nakajima Y."/>
            <person name="Mizuno T."/>
            <person name="Morinaga M."/>
            <person name="Sasaki M."/>
            <person name="Togashi T."/>
            <person name="Oyama M."/>
            <person name="Hata H."/>
            <person name="Watanabe M."/>
            <person name="Komatsu T."/>
            <person name="Mizushima-Sugano J."/>
            <person name="Satoh T."/>
            <person name="Shirai Y."/>
            <person name="Takahashi Y."/>
            <person name="Nakagawa K."/>
            <person name="Okumura K."/>
            <person name="Nagase T."/>
            <person name="Nomura N."/>
            <person name="Kikuchi H."/>
            <person name="Masuho Y."/>
            <person name="Yamashita R."/>
            <person name="Nakai K."/>
            <person name="Yada T."/>
            <person name="Nakamura Y."/>
            <person name="Ohara O."/>
            <person name="Isogai T."/>
            <person name="Sugano S."/>
        </authorList>
    </citation>
    <scope>NUCLEOTIDE SEQUENCE [LARGE SCALE MRNA]</scope>
    <source>
        <tissue>Amygdala</tissue>
        <tissue>Cerebellum</tissue>
    </source>
</reference>
<reference key="2">
    <citation type="journal article" date="2004" name="Genome Res.">
        <title>The status, quality, and expansion of the NIH full-length cDNA project: the Mammalian Gene Collection (MGC).</title>
        <authorList>
            <consortium name="The MGC Project Team"/>
        </authorList>
    </citation>
    <scope>NUCLEOTIDE SEQUENCE [LARGE SCALE MRNA]</scope>
    <source>
        <tissue>Brain</tissue>
    </source>
</reference>
<reference key="3">
    <citation type="journal article" date="2017" name="Nat. Struct. Mol. Biol.">
        <title>Site-specific mapping of the human SUMO proteome reveals co-modification with phosphorylation.</title>
        <authorList>
            <person name="Hendriks I.A."/>
            <person name="Lyon D."/>
            <person name="Young C."/>
            <person name="Jensen L.J."/>
            <person name="Vertegaal A.C."/>
            <person name="Nielsen M.L."/>
        </authorList>
    </citation>
    <scope>SUMOYLATION [LARGE SCALE ANALYSIS] AT LYS-150 AND LYS-175</scope>
    <scope>IDENTIFICATION BY MASS SPECTROMETRY [LARGE SCALE ANALYSIS]</scope>
</reference>
<sequence>MAAGQREARPQVSLTFEDVAVLFTWDEWRKLAPSQRNLYRDVMLENYRNLVSLGLSFTKPKVISLLQQGEDPWEVEKDSSGVSSLGCKSTPKMTKSTQTQDSFQEQIRKRLKRDEPWNFISERSCIYEEKLKKQQDKNENLQIISVAHTKILTVDRSHKNVEFGQNFYLKSVFIKQQRFAKEKTPSKCEIQRNSFKQNSNLLNQSKIKTAEKRYKCSTCEKAFIHNSSLRKHQKNHTGEKLFKCKECLKAFSQSSALIQHQRTHTGEKPYICKECGKAFSHSASLCKHLRTHTVEKCYRCKECGKSFSRRSGLFIHQKIHAQENPHKYNPGRKASSYSTSLSGSQKIHLRKKSYLCNECGNTFKSSSSLRYHQRIHTGEKPFKCSECGRAFSQSASLIQHERIHTGEKPYRCNECGKGFTSISRLNRHRIIHTGEKLYNCNECGKALSSHSTLIIHERIHTGEKPCKCKVCGKAFRQSSALIQHQRMHTGERPYKCNECDKTFRCNSSLSNHQRIHTGEKPYRCLECGMSFGQSAALIQHQRIHTGEKPFKCNTCGKTFRQSSSLIAHQRIHTGEKPYECNACGKLFSQRSSLTNHYKIHIEEDSLKADLHV</sequence>
<evidence type="ECO:0000250" key="1">
    <source>
        <dbReference type="UniProtKB" id="Q9QXT9"/>
    </source>
</evidence>
<evidence type="ECO:0000255" key="2">
    <source>
        <dbReference type="PROSITE-ProRule" id="PRU00042"/>
    </source>
</evidence>
<evidence type="ECO:0000255" key="3">
    <source>
        <dbReference type="PROSITE-ProRule" id="PRU00119"/>
    </source>
</evidence>
<evidence type="ECO:0000256" key="4">
    <source>
        <dbReference type="SAM" id="MobiDB-lite"/>
    </source>
</evidence>
<evidence type="ECO:0000305" key="5"/>
<evidence type="ECO:0000312" key="6">
    <source>
        <dbReference type="HGNC" id="HGNC:17197"/>
    </source>
</evidence>
<evidence type="ECO:0007744" key="7">
    <source>
    </source>
</evidence>
<proteinExistence type="evidence at protein level"/>
<organism>
    <name type="scientific">Homo sapiens</name>
    <name type="common">Human</name>
    <dbReference type="NCBI Taxonomy" id="9606"/>
    <lineage>
        <taxon>Eukaryota</taxon>
        <taxon>Metazoa</taxon>
        <taxon>Chordata</taxon>
        <taxon>Craniata</taxon>
        <taxon>Vertebrata</taxon>
        <taxon>Euteleostomi</taxon>
        <taxon>Mammalia</taxon>
        <taxon>Eutheria</taxon>
        <taxon>Euarchontoglires</taxon>
        <taxon>Primates</taxon>
        <taxon>Haplorrhini</taxon>
        <taxon>Catarrhini</taxon>
        <taxon>Hominidae</taxon>
        <taxon>Homo</taxon>
    </lineage>
</organism>
<name>Z354B_HUMAN</name>
<keyword id="KW-0238">DNA-binding</keyword>
<keyword id="KW-1017">Isopeptide bond</keyword>
<keyword id="KW-0479">Metal-binding</keyword>
<keyword id="KW-0539">Nucleus</keyword>
<keyword id="KW-1267">Proteomics identification</keyword>
<keyword id="KW-1185">Reference proteome</keyword>
<keyword id="KW-0677">Repeat</keyword>
<keyword id="KW-0804">Transcription</keyword>
<keyword id="KW-0805">Transcription regulation</keyword>
<keyword id="KW-0832">Ubl conjugation</keyword>
<keyword id="KW-0862">Zinc</keyword>
<keyword id="KW-0863">Zinc-finger</keyword>
<accession>Q96LW1</accession>
<accession>A8K0V2</accession>
<accession>Q5U5Z4</accession>
<comment type="function">
    <text evidence="1">Transcriptional repressor that binds DNA upon activation by RAS proteins signal transduction to initiate transcriptional silencing through the recruitment of additional DNA-binding proteins, multisubunit complexes and chromatin-modifying activities to establish a platform for DNMT1 recruitment.</text>
</comment>
<comment type="subcellular location">
    <subcellularLocation>
        <location evidence="1">Nucleus</location>
    </subcellularLocation>
</comment>
<comment type="similarity">
    <text evidence="5">Belongs to the krueppel C2H2-type zinc-finger protein family.</text>
</comment>
<protein>
    <recommendedName>
        <fullName>Zinc finger protein 354B</fullName>
    </recommendedName>
</protein>
<dbReference type="EMBL" id="AK057737">
    <property type="protein sequence ID" value="BAB71556.1"/>
    <property type="molecule type" value="mRNA"/>
</dbReference>
<dbReference type="EMBL" id="AK289667">
    <property type="protein sequence ID" value="BAF82356.1"/>
    <property type="molecule type" value="mRNA"/>
</dbReference>
<dbReference type="EMBL" id="BC104777">
    <property type="protein sequence ID" value="AAI04778.1"/>
    <property type="molecule type" value="mRNA"/>
</dbReference>
<dbReference type="EMBL" id="BC112111">
    <property type="protein sequence ID" value="AAI12112.1"/>
    <property type="molecule type" value="mRNA"/>
</dbReference>
<dbReference type="CCDS" id="CCDS4439.1"/>
<dbReference type="RefSeq" id="NP_478137.1">
    <property type="nucleotide sequence ID" value="NM_058230.3"/>
</dbReference>
<dbReference type="SMR" id="Q96LW1"/>
<dbReference type="BioGRID" id="125594">
    <property type="interactions" value="3"/>
</dbReference>
<dbReference type="FunCoup" id="Q96LW1">
    <property type="interactions" value="203"/>
</dbReference>
<dbReference type="IntAct" id="Q96LW1">
    <property type="interactions" value="4"/>
</dbReference>
<dbReference type="STRING" id="9606.ENSP00000327143"/>
<dbReference type="GlyGen" id="Q96LW1">
    <property type="glycosylation" value="1 site, 1 O-linked glycan (1 site)"/>
</dbReference>
<dbReference type="iPTMnet" id="Q96LW1"/>
<dbReference type="PhosphoSitePlus" id="Q96LW1"/>
<dbReference type="BioMuta" id="ZNF354B"/>
<dbReference type="DMDM" id="74762673"/>
<dbReference type="jPOST" id="Q96LW1"/>
<dbReference type="MassIVE" id="Q96LW1"/>
<dbReference type="PaxDb" id="9606-ENSP00000327143"/>
<dbReference type="PeptideAtlas" id="Q96LW1"/>
<dbReference type="ProteomicsDB" id="77255"/>
<dbReference type="Pumba" id="Q96LW1"/>
<dbReference type="Antibodypedia" id="29455">
    <property type="antibodies" value="16 antibodies from 9 providers"/>
</dbReference>
<dbReference type="DNASU" id="117608"/>
<dbReference type="Ensembl" id="ENST00000322434.8">
    <property type="protein sequence ID" value="ENSP00000327143.3"/>
    <property type="gene ID" value="ENSG00000178338.11"/>
</dbReference>
<dbReference type="GeneID" id="117608"/>
<dbReference type="KEGG" id="hsa:117608"/>
<dbReference type="MANE-Select" id="ENST00000322434.8">
    <property type="protein sequence ID" value="ENSP00000327143.3"/>
    <property type="RefSeq nucleotide sequence ID" value="NM_058230.3"/>
    <property type="RefSeq protein sequence ID" value="NP_478137.1"/>
</dbReference>
<dbReference type="UCSC" id="uc003mjl.4">
    <property type="organism name" value="human"/>
</dbReference>
<dbReference type="AGR" id="HGNC:17197"/>
<dbReference type="CTD" id="117608"/>
<dbReference type="GeneCards" id="ZNF354B"/>
<dbReference type="HGNC" id="HGNC:17197">
    <property type="gene designation" value="ZNF354B"/>
</dbReference>
<dbReference type="HPA" id="ENSG00000178338">
    <property type="expression patterns" value="Low tissue specificity"/>
</dbReference>
<dbReference type="neXtProt" id="NX_Q96LW1"/>
<dbReference type="OpenTargets" id="ENSG00000178338"/>
<dbReference type="PharmGKB" id="PA38210"/>
<dbReference type="VEuPathDB" id="HostDB:ENSG00000178338"/>
<dbReference type="eggNOG" id="KOG1721">
    <property type="taxonomic scope" value="Eukaryota"/>
</dbReference>
<dbReference type="GeneTree" id="ENSGT00940000162570"/>
<dbReference type="HOGENOM" id="CLU_002678_44_5_1"/>
<dbReference type="InParanoid" id="Q96LW1"/>
<dbReference type="OMA" id="FISEKSC"/>
<dbReference type="OrthoDB" id="8117402at2759"/>
<dbReference type="PAN-GO" id="Q96LW1">
    <property type="GO annotations" value="4 GO annotations based on evolutionary models"/>
</dbReference>
<dbReference type="PhylomeDB" id="Q96LW1"/>
<dbReference type="TreeFam" id="TF341817"/>
<dbReference type="PathwayCommons" id="Q96LW1"/>
<dbReference type="Reactome" id="R-HSA-212436">
    <property type="pathway name" value="Generic Transcription Pathway"/>
</dbReference>
<dbReference type="SignaLink" id="Q96LW1"/>
<dbReference type="BioGRID-ORCS" id="117608">
    <property type="hits" value="11 hits in 1141 CRISPR screens"/>
</dbReference>
<dbReference type="ChiTaRS" id="ZNF354B">
    <property type="organism name" value="human"/>
</dbReference>
<dbReference type="GenomeRNAi" id="117608"/>
<dbReference type="Pharos" id="Q96LW1">
    <property type="development level" value="Tdark"/>
</dbReference>
<dbReference type="PRO" id="PR:Q96LW1"/>
<dbReference type="Proteomes" id="UP000005640">
    <property type="component" value="Chromosome 5"/>
</dbReference>
<dbReference type="RNAct" id="Q96LW1">
    <property type="molecule type" value="protein"/>
</dbReference>
<dbReference type="Bgee" id="ENSG00000178338">
    <property type="expression patterns" value="Expressed in metanephros cortex and 122 other cell types or tissues"/>
</dbReference>
<dbReference type="ExpressionAtlas" id="Q96LW1">
    <property type="expression patterns" value="baseline and differential"/>
</dbReference>
<dbReference type="GO" id="GO:0005634">
    <property type="term" value="C:nucleus"/>
    <property type="evidence" value="ECO:0000318"/>
    <property type="project" value="GO_Central"/>
</dbReference>
<dbReference type="GO" id="GO:0003682">
    <property type="term" value="F:chromatin binding"/>
    <property type="evidence" value="ECO:0000250"/>
    <property type="project" value="UniProtKB"/>
</dbReference>
<dbReference type="GO" id="GO:0000981">
    <property type="term" value="F:DNA-binding transcription factor activity, RNA polymerase II-specific"/>
    <property type="evidence" value="ECO:0000318"/>
    <property type="project" value="GO_Central"/>
</dbReference>
<dbReference type="GO" id="GO:0000978">
    <property type="term" value="F:RNA polymerase II cis-regulatory region sequence-specific DNA binding"/>
    <property type="evidence" value="ECO:0000318"/>
    <property type="project" value="GO_Central"/>
</dbReference>
<dbReference type="GO" id="GO:0003714">
    <property type="term" value="F:transcription corepressor activity"/>
    <property type="evidence" value="ECO:0000250"/>
    <property type="project" value="UniProtKB"/>
</dbReference>
<dbReference type="GO" id="GO:0008270">
    <property type="term" value="F:zinc ion binding"/>
    <property type="evidence" value="ECO:0007669"/>
    <property type="project" value="UniProtKB-KW"/>
</dbReference>
<dbReference type="GO" id="GO:0000122">
    <property type="term" value="P:negative regulation of transcription by RNA polymerase II"/>
    <property type="evidence" value="ECO:0000250"/>
    <property type="project" value="UniProtKB"/>
</dbReference>
<dbReference type="GO" id="GO:0006357">
    <property type="term" value="P:regulation of transcription by RNA polymerase II"/>
    <property type="evidence" value="ECO:0000318"/>
    <property type="project" value="GO_Central"/>
</dbReference>
<dbReference type="CDD" id="cd07765">
    <property type="entry name" value="KRAB_A-box"/>
    <property type="match status" value="1"/>
</dbReference>
<dbReference type="FunFam" id="3.30.160.60:FF:000295">
    <property type="entry name" value="zinc finger protein 19"/>
    <property type="match status" value="1"/>
</dbReference>
<dbReference type="FunFam" id="3.30.160.60:FF:000358">
    <property type="entry name" value="zinc finger protein 24"/>
    <property type="match status" value="1"/>
</dbReference>
<dbReference type="FunFam" id="3.30.160.60:FF:002343">
    <property type="entry name" value="Zinc finger protein 33A"/>
    <property type="match status" value="2"/>
</dbReference>
<dbReference type="FunFam" id="3.30.160.60:FF:000387">
    <property type="entry name" value="Zinc finger protein 354A"/>
    <property type="match status" value="2"/>
</dbReference>
<dbReference type="FunFam" id="3.30.160.60:FF:000579">
    <property type="entry name" value="Zinc finger protein 354B"/>
    <property type="match status" value="1"/>
</dbReference>
<dbReference type="FunFam" id="3.30.160.60:FF:001586">
    <property type="entry name" value="Zinc finger protein 354B"/>
    <property type="match status" value="1"/>
</dbReference>
<dbReference type="FunFam" id="3.30.160.60:FF:000011">
    <property type="entry name" value="zinc finger protein 615 isoform X1"/>
    <property type="match status" value="2"/>
</dbReference>
<dbReference type="FunFam" id="3.30.160.60:FF:000416">
    <property type="entry name" value="zinc finger protein 879 isoform X1"/>
    <property type="match status" value="1"/>
</dbReference>
<dbReference type="FunFam" id="3.30.160.60:FF:000229">
    <property type="entry name" value="Zinc finger protein 90 homolog"/>
    <property type="match status" value="1"/>
</dbReference>
<dbReference type="FunFam" id="3.30.160.60:FF:000485">
    <property type="entry name" value="Zinc finger protein 90 homolog"/>
    <property type="match status" value="1"/>
</dbReference>
<dbReference type="Gene3D" id="6.10.140.140">
    <property type="match status" value="1"/>
</dbReference>
<dbReference type="Gene3D" id="3.30.160.60">
    <property type="entry name" value="Classic Zinc Finger"/>
    <property type="match status" value="13"/>
</dbReference>
<dbReference type="InterPro" id="IPR001909">
    <property type="entry name" value="KRAB"/>
</dbReference>
<dbReference type="InterPro" id="IPR036051">
    <property type="entry name" value="KRAB_dom_sf"/>
</dbReference>
<dbReference type="InterPro" id="IPR036236">
    <property type="entry name" value="Znf_C2H2_sf"/>
</dbReference>
<dbReference type="InterPro" id="IPR013087">
    <property type="entry name" value="Znf_C2H2_type"/>
</dbReference>
<dbReference type="PANTHER" id="PTHR24381">
    <property type="entry name" value="ZINC FINGER PROTEIN"/>
    <property type="match status" value="1"/>
</dbReference>
<dbReference type="PANTHER" id="PTHR24381:SF384">
    <property type="entry name" value="ZINC FINGER PROTEIN 2"/>
    <property type="match status" value="1"/>
</dbReference>
<dbReference type="Pfam" id="PF01352">
    <property type="entry name" value="KRAB"/>
    <property type="match status" value="1"/>
</dbReference>
<dbReference type="Pfam" id="PF00096">
    <property type="entry name" value="zf-C2H2"/>
    <property type="match status" value="13"/>
</dbReference>
<dbReference type="SMART" id="SM00349">
    <property type="entry name" value="KRAB"/>
    <property type="match status" value="1"/>
</dbReference>
<dbReference type="SMART" id="SM00355">
    <property type="entry name" value="ZnF_C2H2"/>
    <property type="match status" value="13"/>
</dbReference>
<dbReference type="SUPFAM" id="SSF57667">
    <property type="entry name" value="beta-beta-alpha zinc fingers"/>
    <property type="match status" value="9"/>
</dbReference>
<dbReference type="SUPFAM" id="SSF109640">
    <property type="entry name" value="KRAB domain (Kruppel-associated box)"/>
    <property type="match status" value="1"/>
</dbReference>
<dbReference type="PROSITE" id="PS50805">
    <property type="entry name" value="KRAB"/>
    <property type="match status" value="1"/>
</dbReference>
<dbReference type="PROSITE" id="PS00028">
    <property type="entry name" value="ZINC_FINGER_C2H2_1"/>
    <property type="match status" value="13"/>
</dbReference>
<dbReference type="PROSITE" id="PS50157">
    <property type="entry name" value="ZINC_FINGER_C2H2_2"/>
    <property type="match status" value="13"/>
</dbReference>